<evidence type="ECO:0000250" key="1">
    <source>
        <dbReference type="UniProtKB" id="D0EZM8"/>
    </source>
</evidence>
<evidence type="ECO:0000250" key="2">
    <source>
        <dbReference type="UniProtKB" id="Q9PZT1"/>
    </source>
</evidence>
<evidence type="ECO:0000255" key="3">
    <source>
        <dbReference type="PROSITE-ProRule" id="PRU00551"/>
    </source>
</evidence>
<evidence type="ECO:0000255" key="4">
    <source>
        <dbReference type="PROSITE-ProRule" id="PRU01366"/>
    </source>
</evidence>
<evidence type="ECO:0000256" key="5">
    <source>
        <dbReference type="SAM" id="MobiDB-lite"/>
    </source>
</evidence>
<evidence type="ECO:0000269" key="6">
    <source>
    </source>
</evidence>
<evidence type="ECO:0000269" key="7">
    <source>
    </source>
</evidence>
<evidence type="ECO:0000269" key="8">
    <source>
    </source>
</evidence>
<evidence type="ECO:0000269" key="9">
    <source>
    </source>
</evidence>
<evidence type="ECO:0000269" key="10">
    <source>
    </source>
</evidence>
<evidence type="ECO:0000269" key="11">
    <source>
    </source>
</evidence>
<evidence type="ECO:0000269" key="12">
    <source>
    </source>
</evidence>
<evidence type="ECO:0000269" key="13">
    <source>
    </source>
</evidence>
<evidence type="ECO:0000269" key="14">
    <source>
    </source>
</evidence>
<evidence type="ECO:0000269" key="15">
    <source>
    </source>
</evidence>
<evidence type="ECO:0000269" key="16">
    <source>
    </source>
</evidence>
<evidence type="ECO:0000269" key="17">
    <source>
    </source>
</evidence>
<evidence type="ECO:0000269" key="18">
    <source>
    </source>
</evidence>
<evidence type="ECO:0000269" key="19">
    <source>
    </source>
</evidence>
<evidence type="ECO:0000269" key="20">
    <source>
    </source>
</evidence>
<evidence type="ECO:0000269" key="21">
    <source>
    </source>
</evidence>
<evidence type="ECO:0000303" key="22">
    <source>
    </source>
</evidence>
<evidence type="ECO:0000305" key="23"/>
<evidence type="ECO:0007744" key="24">
    <source>
        <dbReference type="PDB" id="3WRN"/>
    </source>
</evidence>
<evidence type="ECO:0007744" key="25">
    <source>
        <dbReference type="PDB" id="3WRO"/>
    </source>
</evidence>
<evidence type="ECO:0007744" key="26">
    <source>
        <dbReference type="PDB" id="3WRQ"/>
    </source>
</evidence>
<evidence type="ECO:0007744" key="27">
    <source>
        <dbReference type="PDB" id="3WRR"/>
    </source>
</evidence>
<evidence type="ECO:0007744" key="28">
    <source>
        <dbReference type="PDB" id="3WRS"/>
    </source>
</evidence>
<evidence type="ECO:0007744" key="29">
    <source>
        <dbReference type="PDB" id="4PP4"/>
    </source>
</evidence>
<evidence type="ECO:0007744" key="30">
    <source>
        <dbReference type="PDB" id="4R94"/>
    </source>
</evidence>
<evidence type="ECO:0007829" key="31">
    <source>
        <dbReference type="PDB" id="3WRO"/>
    </source>
</evidence>
<evidence type="ECO:0007829" key="32">
    <source>
        <dbReference type="PDB" id="4PP4"/>
    </source>
</evidence>
<proteinExistence type="evidence at protein level"/>
<name>NS1_MUMIP</name>
<gene>
    <name type="primary">NS1</name>
</gene>
<dbReference type="EC" id="3.1.21.-" evidence="2"/>
<dbReference type="EC" id="3.6.4.12" evidence="9 11"/>
<dbReference type="EMBL" id="J02275">
    <property type="protein sequence ID" value="AAA67109.1"/>
    <property type="molecule type" value="Genomic_DNA"/>
</dbReference>
<dbReference type="EMBL" id="V01115">
    <property type="protein sequence ID" value="CAA24309.1"/>
    <property type="status" value="ALT_INIT"/>
    <property type="molecule type" value="Genomic_DNA"/>
</dbReference>
<dbReference type="PIR" id="A03696">
    <property type="entry name" value="UYPV1M"/>
</dbReference>
<dbReference type="RefSeq" id="NP_041242.1">
    <property type="nucleotide sequence ID" value="NC_001510.1"/>
</dbReference>
<dbReference type="RefSeq" id="NP_041243.1">
    <property type="nucleotide sequence ID" value="NC_001510.1"/>
</dbReference>
<dbReference type="PDB" id="3WRN">
    <property type="method" value="X-ray"/>
    <property type="resolution" value="1.52 A"/>
    <property type="chains" value="A=1-255"/>
</dbReference>
<dbReference type="PDB" id="3WRO">
    <property type="method" value="X-ray"/>
    <property type="resolution" value="1.48 A"/>
    <property type="chains" value="A=1-255"/>
</dbReference>
<dbReference type="PDB" id="3WRQ">
    <property type="method" value="X-ray"/>
    <property type="resolution" value="1.53 A"/>
    <property type="chains" value="A=1-255"/>
</dbReference>
<dbReference type="PDB" id="3WRR">
    <property type="method" value="X-ray"/>
    <property type="resolution" value="1.62 A"/>
    <property type="chains" value="A=1-255"/>
</dbReference>
<dbReference type="PDB" id="3WRS">
    <property type="method" value="X-ray"/>
    <property type="resolution" value="1.58 A"/>
    <property type="chains" value="A=1-255"/>
</dbReference>
<dbReference type="PDB" id="4PP4">
    <property type="method" value="X-ray"/>
    <property type="resolution" value="1.45 A"/>
    <property type="chains" value="A=1-255"/>
</dbReference>
<dbReference type="PDB" id="4R94">
    <property type="method" value="X-ray"/>
    <property type="resolution" value="1.67 A"/>
    <property type="chains" value="A=1-255"/>
</dbReference>
<dbReference type="PDBsum" id="3WRN"/>
<dbReference type="PDBsum" id="3WRO"/>
<dbReference type="PDBsum" id="3WRQ"/>
<dbReference type="PDBsum" id="3WRR"/>
<dbReference type="PDBsum" id="3WRS"/>
<dbReference type="PDBsum" id="4PP4"/>
<dbReference type="PDBsum" id="4R94"/>
<dbReference type="SMR" id="P03134"/>
<dbReference type="DIP" id="DIP-46505N"/>
<dbReference type="IntAct" id="P03134">
    <property type="interactions" value="5"/>
</dbReference>
<dbReference type="GeneID" id="1489590"/>
<dbReference type="KEGG" id="vg:1489590"/>
<dbReference type="EvolutionaryTrace" id="P03134"/>
<dbReference type="Proteomes" id="UP000007019">
    <property type="component" value="Segment"/>
</dbReference>
<dbReference type="GO" id="GO:0042025">
    <property type="term" value="C:host cell nucleus"/>
    <property type="evidence" value="ECO:0007669"/>
    <property type="project" value="UniProtKB-SubCell"/>
</dbReference>
<dbReference type="GO" id="GO:0005524">
    <property type="term" value="F:ATP binding"/>
    <property type="evidence" value="ECO:0007669"/>
    <property type="project" value="UniProtKB-KW"/>
</dbReference>
<dbReference type="GO" id="GO:0016887">
    <property type="term" value="F:ATP hydrolysis activity"/>
    <property type="evidence" value="ECO:0007669"/>
    <property type="project" value="RHEA"/>
</dbReference>
<dbReference type="GO" id="GO:0003677">
    <property type="term" value="F:DNA binding"/>
    <property type="evidence" value="ECO:0007669"/>
    <property type="project" value="UniProtKB-KW"/>
</dbReference>
<dbReference type="GO" id="GO:0004519">
    <property type="term" value="F:endonuclease activity"/>
    <property type="evidence" value="ECO:0000314"/>
    <property type="project" value="UniProtKB"/>
</dbReference>
<dbReference type="GO" id="GO:0004386">
    <property type="term" value="F:helicase activity"/>
    <property type="evidence" value="ECO:0000314"/>
    <property type="project" value="UniProtKB"/>
</dbReference>
<dbReference type="GO" id="GO:0046872">
    <property type="term" value="F:metal ion binding"/>
    <property type="evidence" value="ECO:0007669"/>
    <property type="project" value="UniProtKB-KW"/>
</dbReference>
<dbReference type="GO" id="GO:0006260">
    <property type="term" value="P:DNA replication"/>
    <property type="evidence" value="ECO:0007669"/>
    <property type="project" value="UniProtKB-KW"/>
</dbReference>
<dbReference type="GO" id="GO:0039685">
    <property type="term" value="P:rolling hairpin viral DNA replication"/>
    <property type="evidence" value="ECO:0000314"/>
    <property type="project" value="UniProtKB"/>
</dbReference>
<dbReference type="GO" id="GO:0039592">
    <property type="term" value="P:symbiont-mediated arrest of host cell cycle during G2/M transition"/>
    <property type="evidence" value="ECO:0007669"/>
    <property type="project" value="UniProtKB-KW"/>
</dbReference>
<dbReference type="GO" id="GO:0052150">
    <property type="term" value="P:symbiont-mediated perturbation of host apoptosis"/>
    <property type="evidence" value="ECO:0007669"/>
    <property type="project" value="UniProtKB-KW"/>
</dbReference>
<dbReference type="GO" id="GO:0039645">
    <property type="term" value="P:symbiont-mediated perturbation of host cell cycle G1/S transition checkpoint"/>
    <property type="evidence" value="ECO:0007669"/>
    <property type="project" value="UniProtKB-KW"/>
</dbReference>
<dbReference type="GO" id="GO:0052026">
    <property type="term" value="P:symbiont-mediated perturbation of host transcription"/>
    <property type="evidence" value="ECO:0000314"/>
    <property type="project" value="UniProtKB"/>
</dbReference>
<dbReference type="FunFam" id="3.40.1310.20:FF:000004">
    <property type="entry name" value="Initiator protein NS1"/>
    <property type="match status" value="1"/>
</dbReference>
<dbReference type="FunFam" id="3.40.50.300:FF:003160">
    <property type="entry name" value="Initiator protein NS1"/>
    <property type="match status" value="1"/>
</dbReference>
<dbReference type="Gene3D" id="3.40.1310.20">
    <property type="match status" value="1"/>
</dbReference>
<dbReference type="Gene3D" id="3.40.50.300">
    <property type="entry name" value="P-loop containing nucleotide triphosphate hydrolases"/>
    <property type="match status" value="1"/>
</dbReference>
<dbReference type="InterPro" id="IPR014015">
    <property type="entry name" value="Helicase_SF3_DNA-vir"/>
</dbReference>
<dbReference type="InterPro" id="IPR027417">
    <property type="entry name" value="P-loop_NTPase"/>
</dbReference>
<dbReference type="InterPro" id="IPR021972">
    <property type="entry name" value="Parvovirus_NS1_C"/>
</dbReference>
<dbReference type="InterPro" id="IPR001257">
    <property type="entry name" value="Parvovirus_NS1_helicase"/>
</dbReference>
<dbReference type="InterPro" id="IPR021076">
    <property type="entry name" value="Parvovirus_NS1_N"/>
</dbReference>
<dbReference type="InterPro" id="IPR049901">
    <property type="entry name" value="PV_NS1-NUC"/>
</dbReference>
<dbReference type="Pfam" id="PF12117">
    <property type="entry name" value="NS1_C"/>
    <property type="match status" value="1"/>
</dbReference>
<dbReference type="Pfam" id="PF01057">
    <property type="entry name" value="Parvo_NS1"/>
    <property type="match status" value="1"/>
</dbReference>
<dbReference type="Pfam" id="PF12433">
    <property type="entry name" value="PV_NSP1"/>
    <property type="match status" value="1"/>
</dbReference>
<dbReference type="SUPFAM" id="SSF55464">
    <property type="entry name" value="Origin of replication-binding domain, RBD-like"/>
    <property type="match status" value="1"/>
</dbReference>
<dbReference type="SUPFAM" id="SSF52540">
    <property type="entry name" value="P-loop containing nucleoside triphosphate hydrolases"/>
    <property type="match status" value="1"/>
</dbReference>
<dbReference type="PROSITE" id="PS52022">
    <property type="entry name" value="PV_NS1_NUC"/>
    <property type="match status" value="1"/>
</dbReference>
<dbReference type="PROSITE" id="PS51206">
    <property type="entry name" value="SF3_HELICASE_1"/>
    <property type="match status" value="1"/>
</dbReference>
<reference key="1">
    <citation type="journal article" date="1983" name="Nucleic Acids Res.">
        <title>The complete DNA sequence of minute virus of mice, an autonomous parvovirus.</title>
        <authorList>
            <person name="Astell C.R."/>
            <person name="Thomson M."/>
            <person name="Merchlinsky M."/>
            <person name="Ward D.C."/>
        </authorList>
    </citation>
    <scope>NUCLEOTIDE SEQUENCE [GENOMIC DNA]</scope>
</reference>
<reference key="2">
    <citation type="journal article" date="1991" name="Virology">
        <title>Expression of minute virus of mice major nonstructural protein in insect cells: purification and identification of ATPase and helicase activities.</title>
        <authorList>
            <person name="Wilson G.M."/>
            <person name="Jindal H.K."/>
            <person name="Yeung D.E."/>
            <person name="Chen W."/>
            <person name="Astell C.R."/>
        </authorList>
    </citation>
    <scope>CATALYTIC ACTIVITY</scope>
</reference>
<reference key="3">
    <citation type="journal article" date="1995" name="J. Virol.">
        <title>Minute virus of mice transcriptional activator protein NS1 binds directly to the transactivation region of the viral P38 promoter in a strictly ATP-dependent manner.</title>
        <authorList>
            <person name="Christensen J."/>
            <person name="Cotmore S.F."/>
            <person name="Tattersall P."/>
        </authorList>
    </citation>
    <scope>FUNCTION</scope>
    <scope>DNA-BINDING</scope>
</reference>
<reference key="4">
    <citation type="journal article" date="1995" name="Mol. Cell. Biol.">
        <title>Transcriptional activation by the parvoviral nonstructural protein NS-1 is mediated via a direct interaction with Sp1.</title>
        <authorList>
            <person name="Krady J.K."/>
            <person name="Ward D.C."/>
        </authorList>
    </citation>
    <scope>INTERACTION WITH HOST SP1</scope>
    <scope>DOMAIN</scope>
</reference>
<reference key="5">
    <citation type="journal article" date="1996" name="J. Virol.">
        <title>Efficient transactivation of the minute virus of mice P38 promoter requires upstream binding of NS1.</title>
        <authorList>
            <person name="Lorson C."/>
            <person name="Burger L.R."/>
            <person name="Mouw M."/>
            <person name="Pintel D.J."/>
        </authorList>
    </citation>
    <scope>FUNCTION</scope>
    <scope>DNA-BINDING</scope>
</reference>
<reference key="6">
    <citation type="journal article" date="1997" name="J. Virol.">
        <title>The NS1 protein of the autonomous parvovirus minute virus of mice blocks cellular DNA replication: a consequence of lesions to the chromatin?</title>
        <authorList>
            <person name="Op De Beeck A."/>
            <person name="Caillet-Fauquet P."/>
        </authorList>
    </citation>
    <scope>FUNCTION</scope>
</reference>
<reference key="7">
    <citation type="journal article" date="1997" name="J. Gen. Virol.">
        <title>The minute virus of mice (MVM) nonstructural protein NS1 induces nicking of MVM DNA at a unique site of the right-end telomere in both hairpin and duplex conformations in vitro.</title>
        <authorList>
            <person name="Willwand K."/>
            <person name="Baldauf A.Q."/>
            <person name="Deleu L."/>
            <person name="Mumtsidu E."/>
            <person name="Costello E."/>
            <person name="Beard P."/>
            <person name="Rommelaere J."/>
        </authorList>
    </citation>
    <scope>FUNCTION</scope>
</reference>
<reference key="8">
    <citation type="journal article" date="1998" name="Virology">
        <title>Amino acids 16-275 of minute virus of mice NS1 include a domain that specifically binds (ACCA)2-3-containing DNA.</title>
        <authorList>
            <person name="Mouw M."/>
            <person name="Pintel D.J."/>
        </authorList>
    </citation>
    <scope>DNA-BINDING</scope>
</reference>
<reference key="9">
    <citation type="journal article" date="1998" name="Virology">
        <title>An Sp1-binding site and TATA element are sufficient to support full transactivation by proximally bound NS1 protein of minute virus of mice.</title>
        <authorList>
            <person name="Lorson C."/>
            <person name="Pearson J."/>
            <person name="Burger L."/>
            <person name="Pintel D.J."/>
        </authorList>
    </citation>
    <scope>INTERACTION WITH HOST SP1</scope>
</reference>
<reference key="10">
    <citation type="journal article" date="1999" name="J. Virol.">
        <title>A novel heterogeneous nuclear ribonucleoprotein-like protein interacts with NS1 of the minute virus of mice.</title>
        <authorList>
            <person name="Harris C.E."/>
            <person name="Boden R.A."/>
            <person name="Astell C.R."/>
        </authorList>
    </citation>
    <scope>INTERACTION WITH SYNCRIP</scope>
</reference>
<reference key="11">
    <citation type="journal article" date="1999" name="Virology">
        <title>Phosphorylation of the viral nonstructural protein NS1 during MVMp infection of A9 cells.</title>
        <authorList>
            <person name="Corbau R."/>
            <person name="Salom N."/>
            <person name="Rommelaere J."/>
            <person name="Nuesch J.P."/>
        </authorList>
    </citation>
    <scope>PHOSPHORYLATION</scope>
</reference>
<reference key="12">
    <citation type="journal article" date="2001" name="J. Virol.">
        <title>NS1- and minute virus of mice-induced cell cycle arrest: involvement of p53 and p21(cip1).</title>
        <authorList>
            <person name="Op De Beeck A."/>
            <person name="Sobczak-Thepot J."/>
            <person name="Sirma H."/>
            <person name="Bourgain F."/>
            <person name="Brechot C."/>
            <person name="Caillet-Fauquet P."/>
        </authorList>
    </citation>
    <scope>FUNCTION</scope>
</reference>
<reference key="13">
    <citation type="journal article" date="2001" name="J. Virol.">
        <title>Minute virus of mice initiator protein NS1 and a host KDWK family transcription factor must form a precise ternary complex with origin DNA for nicking to occur.</title>
        <authorList>
            <person name="Christensen J."/>
            <person name="Cotmore S.F."/>
            <person name="Tattersall P."/>
        </authorList>
    </citation>
    <scope>FUNCTION</scope>
    <scope>DNA-BINDING</scope>
</reference>
<reference key="14">
    <citation type="journal article" date="2007" name="J. Virol.">
        <title>Replication initiator protein NS1 of the parvovirus minute virus of mice binds to modular divergent sites distributed throughout duplex viral DNA.</title>
        <authorList>
            <person name="Cotmore S.F."/>
            <person name="Gottlieb R.L."/>
            <person name="Tattersall P."/>
        </authorList>
    </citation>
    <scope>FUNCTION</scope>
    <scope>DNA-BINDING</scope>
</reference>
<reference key="15">
    <citation type="journal article" date="2002" name="J. Virol.">
        <title>Parvovirus initiator protein NS1 and RPA coordinate replication fork progression in a reconstituted DNA replication system.</title>
        <authorList>
            <person name="Christensen J."/>
            <person name="Tattersall P."/>
        </authorList>
    </citation>
    <scope>FUNCTION</scope>
    <scope>CATALYTIC ACTIVITY</scope>
</reference>
<reference key="16">
    <citation type="journal article" date="2011" name="Virology">
        <title>Minute virus of mice (MVMp) infection and NS1 expression induce p53 independent apoptosis in transformed rat fibroblast cells.</title>
        <authorList>
            <person name="Mincberg M."/>
            <person name="Gopas J."/>
            <person name="Tal J."/>
        </authorList>
    </citation>
    <scope>FUNCTION</scope>
</reference>
<reference evidence="24 25 26 27 28 29 30" key="17">
    <citation type="journal article" date="2015" name="Virology">
        <title>Structures of minute virus of mice replication initiator protein N-terminal domain: Insights into DNA nicking and origin binding.</title>
        <authorList>
            <person name="Tewary S.K."/>
            <person name="Liang L."/>
            <person name="Lin Z."/>
            <person name="Lynn A."/>
            <person name="Cotmore S.F."/>
            <person name="Tattersall P."/>
            <person name="Zhao H."/>
            <person name="Tang L."/>
        </authorList>
    </citation>
    <scope>X-RAY CRYSTALLOGRAPHY (1.45 ANGSTROMS) OF 1-255 IN COMPLEX WITH COPPER; MAGNESIUM; MANGANESE AND ZINC</scope>
    <scope>ACTIVE SITE</scope>
    <scope>COFACTOR</scope>
</reference>
<organism>
    <name type="scientific">Murine minute virus (strain MVM prototype)</name>
    <name type="common">MVM</name>
    <name type="synonym">Murine minute virus (strain MVM(p))</name>
    <dbReference type="NCBI Taxonomy" id="648235"/>
    <lineage>
        <taxon>Viruses</taxon>
        <taxon>Monodnaviria</taxon>
        <taxon>Shotokuvirae</taxon>
        <taxon>Cossaviricota</taxon>
        <taxon>Quintoviricetes</taxon>
        <taxon>Piccovirales</taxon>
        <taxon>Parvoviridae</taxon>
        <taxon>Parvovirinae</taxon>
        <taxon>Protoparvovirus</taxon>
        <taxon>Protoparvovirus rodent1</taxon>
    </lineage>
</organism>
<organismHost>
    <name type="scientific">Mus musculus</name>
    <name type="common">Mouse</name>
    <dbReference type="NCBI Taxonomy" id="10090"/>
</organismHost>
<accession>P03134</accession>
<protein>
    <recommendedName>
        <fullName evidence="22">Initiator protein NS1</fullName>
        <shortName>NS1</shortName>
        <ecNumber evidence="2">3.1.21.-</ecNumber>
        <ecNumber evidence="9 11">3.6.4.12</ecNumber>
    </recommendedName>
    <alternativeName>
        <fullName>NCVP1</fullName>
    </alternativeName>
    <alternativeName>
        <fullName>Non-capsid protein NS-1</fullName>
    </alternativeName>
    <alternativeName>
        <fullName>Non-structural protein NS1</fullName>
    </alternativeName>
</protein>
<sequence length="672" mass="76249">MAGNAYSDEVLGATNWLKEKSNQEVFSFVFKNENVQLNGKDIGWNSYKKELQEDELKSLQRGAETTWDQSEDMEWETTVDEMTKKQVFIFDSLVKKCLFEVLNTKNIFPGDVNWFVQHEWGKDQGWHCHVLIGGKDFSQAQGKWWRRQLNVYWSRWLVTACNVQLTPAERIKLREIAEDNEWVTLLTYKHKQTKKDYTKCVLFGNMIAYYFLTKKKISTSPPRDGGYFLSSDSGWKTNFLKEGERHLVSKLYTDDMRPETVETTVTTAQETKRGRIQTKKEVSIKTTLKELVHKRVTSPEDWMMMQPDSYIEMMAQPGGENLLKNTLEICTLTLARTKTAFDLILEKAETSKLTNFSLPDTRTCRIFAFHGWNYVKVCHAICCVLNRQGGKRNTVLFHGPASTGKSIIAQAIAQAVGNVGCYNAANVNFPFNDCTNKNLIWVEEAGNFGQQVNQFKAICSGQTIRIDQKGKGSKQIEPTPVIMTTNENITVVRIGCEERPEHTQPIRDRMLNIHLTHTLPGDFGLVDKNEWPMICAWLVKNGYQSTMASYCAKWGKVPDWSENWAEPKVPTPINLLGSARSPFTTPKSTPLSQNYALTPLASDLEDLALEPWSTPNTPVAGTAETQNTGEAGSKACQDGQLSPTWSEIEEDLRACFGAEPLKKDFSEPLNLD</sequence>
<feature type="chain" id="PRO_0000222466" description="Initiator protein NS1">
    <location>
        <begin position="1"/>
        <end position="672"/>
    </location>
</feature>
<feature type="domain" description="PV NS1-Nuc" evidence="4">
    <location>
        <begin position="21"/>
        <end position="259"/>
    </location>
</feature>
<feature type="domain" description="SF3 helicase" evidence="3">
    <location>
        <begin position="373"/>
        <end position="528"/>
    </location>
</feature>
<feature type="region of interest" description="DNA-binding; interaction with SYNCRIP" evidence="20 21">
    <location>
        <begin position="1"/>
        <end position="276"/>
    </location>
</feature>
<feature type="region of interest" description="Ori-binding" evidence="13">
    <location>
        <begin position="191"/>
        <end position="195"/>
    </location>
</feature>
<feature type="region of interest" description="Transactivation" evidence="15">
    <location>
        <begin position="543"/>
        <end position="672"/>
    </location>
</feature>
<feature type="region of interest" description="Disordered" evidence="5">
    <location>
        <begin position="613"/>
        <end position="643"/>
    </location>
</feature>
<feature type="short sequence motif" description="RCR-2" evidence="4">
    <location>
        <begin position="127"/>
        <end position="129"/>
    </location>
</feature>
<feature type="short sequence motif" description="RCR-3" evidence="4">
    <location>
        <begin position="210"/>
        <end position="214"/>
    </location>
</feature>
<feature type="compositionally biased region" description="Polar residues" evidence="5">
    <location>
        <begin position="613"/>
        <end position="630"/>
    </location>
</feature>
<feature type="active site" description="For nuclease activity" evidence="4 13">
    <location>
        <position position="210"/>
    </location>
</feature>
<feature type="binding site" evidence="4 13">
    <location>
        <position position="119"/>
    </location>
    <ligand>
        <name>a divalent metal cation</name>
        <dbReference type="ChEBI" id="CHEBI:60240"/>
    </ligand>
</feature>
<feature type="binding site" evidence="4 13">
    <location>
        <position position="127"/>
    </location>
    <ligand>
        <name>a divalent metal cation</name>
        <dbReference type="ChEBI" id="CHEBI:60240"/>
    </ligand>
</feature>
<feature type="binding site" evidence="4 13">
    <location>
        <position position="129"/>
    </location>
    <ligand>
        <name>a divalent metal cation</name>
        <dbReference type="ChEBI" id="CHEBI:60240"/>
    </ligand>
</feature>
<feature type="binding site" evidence="3">
    <location>
        <begin position="399"/>
        <end position="406"/>
    </location>
    <ligand>
        <name>ATP</name>
        <dbReference type="ChEBI" id="CHEBI:30616"/>
    </ligand>
</feature>
<feature type="helix" evidence="32">
    <location>
        <begin position="8"/>
        <end position="19"/>
    </location>
</feature>
<feature type="turn" evidence="32">
    <location>
        <begin position="20"/>
        <end position="22"/>
    </location>
</feature>
<feature type="strand" evidence="32">
    <location>
        <begin position="24"/>
        <end position="31"/>
    </location>
</feature>
<feature type="strand" evidence="32">
    <location>
        <begin position="35"/>
        <end position="37"/>
    </location>
</feature>
<feature type="strand" evidence="32">
    <location>
        <begin position="40"/>
        <end position="42"/>
    </location>
</feature>
<feature type="helix" evidence="32">
    <location>
        <begin position="54"/>
        <end position="70"/>
    </location>
</feature>
<feature type="strand" evidence="32">
    <location>
        <begin position="73"/>
        <end position="75"/>
    </location>
</feature>
<feature type="helix" evidence="32">
    <location>
        <begin position="81"/>
        <end position="104"/>
    </location>
</feature>
<feature type="helix" evidence="32">
    <location>
        <begin position="109"/>
        <end position="111"/>
    </location>
</feature>
<feature type="strand" evidence="32">
    <location>
        <begin position="112"/>
        <end position="121"/>
    </location>
</feature>
<feature type="turn" evidence="32">
    <location>
        <begin position="122"/>
        <end position="124"/>
    </location>
</feature>
<feature type="strand" evidence="32">
    <location>
        <begin position="125"/>
        <end position="134"/>
    </location>
</feature>
<feature type="helix" evidence="32">
    <location>
        <begin position="139"/>
        <end position="141"/>
    </location>
</feature>
<feature type="helix" evidence="32">
    <location>
        <begin position="142"/>
        <end position="160"/>
    </location>
</feature>
<feature type="helix" evidence="32">
    <location>
        <begin position="167"/>
        <end position="179"/>
    </location>
</feature>
<feature type="strand" evidence="32">
    <location>
        <begin position="182"/>
        <end position="185"/>
    </location>
</feature>
<feature type="strand" evidence="31">
    <location>
        <begin position="192"/>
        <end position="194"/>
    </location>
</feature>
<feature type="helix" evidence="32">
    <location>
        <begin position="203"/>
        <end position="209"/>
    </location>
</feature>
<feature type="helix" evidence="32">
    <location>
        <begin position="211"/>
        <end position="213"/>
    </location>
</feature>
<feature type="strand" evidence="32">
    <location>
        <begin position="219"/>
        <end position="221"/>
    </location>
</feature>
<feature type="strand" evidence="32">
    <location>
        <begin position="227"/>
        <end position="232"/>
    </location>
</feature>
<feature type="strand" evidence="32">
    <location>
        <begin position="235"/>
        <end position="237"/>
    </location>
</feature>
<feature type="helix" evidence="32">
    <location>
        <begin position="242"/>
        <end position="252"/>
    </location>
</feature>
<keyword id="KW-0002">3D-structure</keyword>
<keyword id="KW-0067">ATP-binding</keyword>
<keyword id="KW-0190">Covalent protein-DNA linkage</keyword>
<keyword id="KW-0235">DNA replication</keyword>
<keyword id="KW-0238">DNA-binding</keyword>
<keyword id="KW-0255">Endonuclease</keyword>
<keyword id="KW-1078">G1/S host cell cycle checkpoint dysregulation by virus</keyword>
<keyword id="KW-0347">Helicase</keyword>
<keyword id="KW-1079">Host G2/M cell cycle arrest by virus</keyword>
<keyword id="KW-1048">Host nucleus</keyword>
<keyword id="KW-0945">Host-virus interaction</keyword>
<keyword id="KW-0378">Hydrolase</keyword>
<keyword id="KW-0460">Magnesium</keyword>
<keyword id="KW-0479">Metal-binding</keyword>
<keyword id="KW-1119">Modulation of host cell apoptosis by virus</keyword>
<keyword id="KW-1121">Modulation of host cell cycle by virus</keyword>
<keyword id="KW-0540">Nuclease</keyword>
<keyword id="KW-0547">Nucleotide-binding</keyword>
<keyword id="KW-1185">Reference proteome</keyword>
<keyword id="KW-0804">Transcription</keyword>
<keyword id="KW-0805">Transcription regulation</keyword>
<keyword id="KW-1194">Viral DNA replication</keyword>
<keyword id="KW-0231">Viral genome packaging</keyword>
<keyword id="KW-1188">Viral release from host cell</keyword>
<comment type="function">
    <text evidence="7 8 9 10 12 14 16 17 18">Multifunctional protein which displays endonuclease and helicase activities required for initiating and directing viral DNA replication (PubMed:12050365). Also plays a role in viral packaging and transactivation of several promoters (PubMed:7636987). Binds site-specifically to 2-3 approximate tandem copies of the tetranucleotide 5'TGGT3' within the origins of replication (Ori), unwinds this hairpin region and nicks one DNA strand thereby initiating the rolling circle replication (RCR) (PubMed:12050365, PubMed:17898054, PubMed:9349487). Cooperatively binds Ori with host PIF and probably other host factors, which activate the nickase function of NS1 (PubMed:11435581, PubMed:12050365). Becomes covalently attached to the 5' end of the nick and provides a 3'OH for priming DNA synthesis (PubMed:12050365). The helicase activity unwinds DNA in a 3'-5' direction on the longer strand (PubMed:12050365). Participates in the transcriptional regulation of several promoters including the viral p38 promoter that regulates the expression of VP1 and VP2 transcripts (PubMed:7636987, PubMed:8551622). Inhibits the host cell cycle during the G1/S transition, the S-phase, and the G2/M transition (PubMed:11602746, PubMed:9188601). These arrests may provide essential cellular factors for viral DNA replication. Promotes apoptosis in host cell (PubMed:21295324).</text>
</comment>
<comment type="catalytic activity">
    <reaction evidence="9 11">
        <text>ATP + H2O = ADP + phosphate + H(+)</text>
        <dbReference type="Rhea" id="RHEA:13065"/>
        <dbReference type="ChEBI" id="CHEBI:15377"/>
        <dbReference type="ChEBI" id="CHEBI:15378"/>
        <dbReference type="ChEBI" id="CHEBI:30616"/>
        <dbReference type="ChEBI" id="CHEBI:43474"/>
        <dbReference type="ChEBI" id="CHEBI:456216"/>
        <dbReference type="EC" id="3.6.4.12"/>
    </reaction>
</comment>
<comment type="cofactor">
    <cofactor evidence="13">
        <name>Mg(2+)</name>
        <dbReference type="ChEBI" id="CHEBI:18420"/>
    </cofactor>
    <text evidence="13">The endonuclease active site can probably bind other divalent cations.</text>
</comment>
<comment type="subunit">
    <text evidence="2 15 19 21">Homooligomer; when bound to DNA (By similarity). Interacts with human SYNCRIP (PubMed:9847309). Interacts with host transcription factor SP1; this interaction allows high levels of viral P38 promoter transactivation by NS1 (PubMed:7799962, PubMed:9454706).</text>
</comment>
<comment type="interaction">
    <interactant intactId="EBI-9515229">
        <id>P03134</id>
    </interactant>
    <interactant intactId="EBI-309807">
        <id>P97801</id>
        <label>Smn1</label>
    </interactant>
    <organismsDiffer>true</organismsDiffer>
    <experiments>3</experiments>
</comment>
<comment type="subcellular location">
    <subcellularLocation>
        <location evidence="1">Host nucleus</location>
    </subcellularLocation>
</comment>
<comment type="domain">
    <text evidence="2 15">In the N-terminus, the endonuclease region is involved in binding to the origin of replication (By similarity). In the middle, there are the ATPase and helicase activities (By similarity). The C-terminus probably contains a transactivation domain (PubMed:7799962).</text>
</comment>
<comment type="PTM">
    <text evidence="6">Phosphorylated.</text>
</comment>
<comment type="similarity">
    <text evidence="23">Belongs to the parvoviruses initiator protein NS1 family.</text>
</comment>
<comment type="sequence caution" evidence="23">
    <conflict type="erroneous initiation">
        <sequence resource="EMBL-CDS" id="CAA24309"/>
    </conflict>
</comment>